<proteinExistence type="evidence at protein level"/>
<comment type="function">
    <text evidence="1">Involved in transcriptional activation and repression of select genes by chromatin remodeling (alteration of DNA-nucleosome topology).</text>
</comment>
<comment type="subunit">
    <text evidence="1">Component of the SWI/SNF-B (PBAF) chromatin-remodeling complex.</text>
</comment>
<comment type="subcellular location">
    <subcellularLocation>
        <location evidence="3 6">Nucleus</location>
    </subcellularLocation>
</comment>
<organism>
    <name type="scientific">Gallus gallus</name>
    <name type="common">Chicken</name>
    <dbReference type="NCBI Taxonomy" id="9031"/>
    <lineage>
        <taxon>Eukaryota</taxon>
        <taxon>Metazoa</taxon>
        <taxon>Chordata</taxon>
        <taxon>Craniata</taxon>
        <taxon>Vertebrata</taxon>
        <taxon>Euteleostomi</taxon>
        <taxon>Archelosauria</taxon>
        <taxon>Archosauria</taxon>
        <taxon>Dinosauria</taxon>
        <taxon>Saurischia</taxon>
        <taxon>Theropoda</taxon>
        <taxon>Coelurosauria</taxon>
        <taxon>Aves</taxon>
        <taxon>Neognathae</taxon>
        <taxon>Galloanserae</taxon>
        <taxon>Galliformes</taxon>
        <taxon>Phasianidae</taxon>
        <taxon>Phasianinae</taxon>
        <taxon>Gallus</taxon>
    </lineage>
</organism>
<keyword id="KW-0002">3D-structure</keyword>
<keyword id="KW-0103">Bromodomain</keyword>
<keyword id="KW-0156">Chromatin regulator</keyword>
<keyword id="KW-0238">DNA-binding</keyword>
<keyword id="KW-0539">Nucleus</keyword>
<keyword id="KW-1185">Reference proteome</keyword>
<keyword id="KW-0677">Repeat</keyword>
<keyword id="KW-0804">Transcription</keyword>
<keyword id="KW-0805">Transcription regulation</keyword>
<accession>Q90941</accession>
<gene>
    <name type="primary">PBRM1</name>
    <name type="synonym">PB1</name>
</gene>
<feature type="chain" id="PRO_0000223186" description="Protein polybromo-1">
    <location>
        <begin position="1"/>
        <end position="1633"/>
    </location>
</feature>
<feature type="domain" description="Bromo 1" evidence="2">
    <location>
        <begin position="42"/>
        <end position="152"/>
    </location>
</feature>
<feature type="domain" description="Bromo 2" evidence="2">
    <location>
        <begin position="174"/>
        <end position="284"/>
    </location>
</feature>
<feature type="domain" description="Bromo 3" evidence="2">
    <location>
        <begin position="379"/>
        <end position="485"/>
    </location>
</feature>
<feature type="domain" description="Bromo 4" evidence="2">
    <location>
        <begin position="512"/>
        <end position="623"/>
    </location>
</feature>
<feature type="domain" description="Bromo 5" evidence="2">
    <location>
        <begin position="651"/>
        <end position="761"/>
    </location>
</feature>
<feature type="domain" description="Bromo 6" evidence="2">
    <location>
        <begin position="767"/>
        <end position="877"/>
    </location>
</feature>
<feature type="domain" description="BAH 1" evidence="4">
    <location>
        <begin position="954"/>
        <end position="1072"/>
    </location>
</feature>
<feature type="domain" description="BAH 2" evidence="4">
    <location>
        <begin position="1155"/>
        <end position="1271"/>
    </location>
</feature>
<feature type="DNA-binding region" description="HMG box" evidence="3">
    <location>
        <begin position="1378"/>
        <end position="1446"/>
    </location>
</feature>
<feature type="region of interest" description="Disordered" evidence="5">
    <location>
        <begin position="1"/>
        <end position="40"/>
    </location>
</feature>
<feature type="region of interest" description="Disordered" evidence="5">
    <location>
        <begin position="155"/>
        <end position="174"/>
    </location>
</feature>
<feature type="region of interest" description="Disordered" evidence="5">
    <location>
        <begin position="300"/>
        <end position="333"/>
    </location>
</feature>
<feature type="region of interest" description="Disordered" evidence="5">
    <location>
        <begin position="484"/>
        <end position="517"/>
    </location>
</feature>
<feature type="region of interest" description="Disordered" evidence="5">
    <location>
        <begin position="623"/>
        <end position="644"/>
    </location>
</feature>
<feature type="region of interest" description="Disordered" evidence="5">
    <location>
        <begin position="900"/>
        <end position="940"/>
    </location>
</feature>
<feature type="region of interest" description="Disordered" evidence="5">
    <location>
        <begin position="1319"/>
        <end position="1377"/>
    </location>
</feature>
<feature type="region of interest" description="Disordered" evidence="5">
    <location>
        <begin position="1509"/>
        <end position="1531"/>
    </location>
</feature>
<feature type="compositionally biased region" description="Acidic residues" evidence="5">
    <location>
        <begin position="158"/>
        <end position="167"/>
    </location>
</feature>
<feature type="compositionally biased region" description="Polar residues" evidence="5">
    <location>
        <begin position="300"/>
        <end position="315"/>
    </location>
</feature>
<feature type="compositionally biased region" description="Polar residues" evidence="5">
    <location>
        <begin position="497"/>
        <end position="506"/>
    </location>
</feature>
<feature type="compositionally biased region" description="Basic residues" evidence="5">
    <location>
        <begin position="508"/>
        <end position="517"/>
    </location>
</feature>
<feature type="compositionally biased region" description="Basic and acidic residues" evidence="5">
    <location>
        <begin position="900"/>
        <end position="931"/>
    </location>
</feature>
<feature type="compositionally biased region" description="Acidic residues" evidence="5">
    <location>
        <begin position="1320"/>
        <end position="1335"/>
    </location>
</feature>
<feature type="compositionally biased region" description="Polar residues" evidence="5">
    <location>
        <begin position="1337"/>
        <end position="1349"/>
    </location>
</feature>
<feature type="strand" evidence="7">
    <location>
        <begin position="961"/>
        <end position="964"/>
    </location>
</feature>
<feature type="strand" evidence="7">
    <location>
        <begin position="974"/>
        <end position="983"/>
    </location>
</feature>
<feature type="strand" evidence="7">
    <location>
        <begin position="989"/>
        <end position="997"/>
    </location>
</feature>
<feature type="helix" evidence="7">
    <location>
        <begin position="999"/>
        <end position="1001"/>
    </location>
</feature>
<feature type="strand" evidence="7">
    <location>
        <begin position="1009"/>
        <end position="1011"/>
    </location>
</feature>
<feature type="strand" evidence="7">
    <location>
        <begin position="1014"/>
        <end position="1025"/>
    </location>
</feature>
<feature type="helix" evidence="7">
    <location>
        <begin position="1026"/>
        <end position="1028"/>
    </location>
</feature>
<feature type="strand" evidence="7">
    <location>
        <begin position="1029"/>
        <end position="1037"/>
    </location>
</feature>
<feature type="helix" evidence="7">
    <location>
        <begin position="1038"/>
        <end position="1041"/>
    </location>
</feature>
<feature type="strand" evidence="7">
    <location>
        <begin position="1044"/>
        <end position="1046"/>
    </location>
</feature>
<feature type="helix" evidence="7">
    <location>
        <begin position="1051"/>
        <end position="1053"/>
    </location>
</feature>
<feature type="strand" evidence="7">
    <location>
        <begin position="1054"/>
        <end position="1062"/>
    </location>
</feature>
<feature type="turn" evidence="7">
    <location>
        <begin position="1063"/>
        <end position="1066"/>
    </location>
</feature>
<feature type="strand" evidence="7">
    <location>
        <begin position="1067"/>
        <end position="1070"/>
    </location>
</feature>
<feature type="strand" evidence="7">
    <location>
        <begin position="1083"/>
        <end position="1085"/>
    </location>
</feature>
<feature type="strand" evidence="7">
    <location>
        <begin position="1094"/>
        <end position="1096"/>
    </location>
</feature>
<evidence type="ECO:0000250" key="1"/>
<evidence type="ECO:0000255" key="2">
    <source>
        <dbReference type="PROSITE-ProRule" id="PRU00035"/>
    </source>
</evidence>
<evidence type="ECO:0000255" key="3">
    <source>
        <dbReference type="PROSITE-ProRule" id="PRU00267"/>
    </source>
</evidence>
<evidence type="ECO:0000255" key="4">
    <source>
        <dbReference type="PROSITE-ProRule" id="PRU00370"/>
    </source>
</evidence>
<evidence type="ECO:0000256" key="5">
    <source>
        <dbReference type="SAM" id="MobiDB-lite"/>
    </source>
</evidence>
<evidence type="ECO:0000269" key="6">
    <source>
    </source>
</evidence>
<evidence type="ECO:0007829" key="7">
    <source>
        <dbReference type="PDB" id="1W4S"/>
    </source>
</evidence>
<name>PB1_CHICK</name>
<dbReference type="EMBL" id="X90849">
    <property type="protein sequence ID" value="CAA62353.1"/>
    <property type="molecule type" value="mRNA"/>
</dbReference>
<dbReference type="PIR" id="JC5056">
    <property type="entry name" value="JC5056"/>
</dbReference>
<dbReference type="RefSeq" id="NP_990496.1">
    <property type="nucleotide sequence ID" value="NM_205165.1"/>
</dbReference>
<dbReference type="PDB" id="1W4S">
    <property type="method" value="X-ray"/>
    <property type="resolution" value="1.55 A"/>
    <property type="chains" value="A=932-1103"/>
</dbReference>
<dbReference type="PDBsum" id="1W4S"/>
<dbReference type="SMR" id="Q90941"/>
<dbReference type="FunCoup" id="Q90941">
    <property type="interactions" value="3031"/>
</dbReference>
<dbReference type="STRING" id="9031.ENSGALP00000045684"/>
<dbReference type="PaxDb" id="9031-ENSGALP00000040734"/>
<dbReference type="GeneID" id="396074"/>
<dbReference type="KEGG" id="gga:396074"/>
<dbReference type="CTD" id="55193"/>
<dbReference type="VEuPathDB" id="HostDB:geneid_396074"/>
<dbReference type="eggNOG" id="KOG1827">
    <property type="taxonomic scope" value="Eukaryota"/>
</dbReference>
<dbReference type="InParanoid" id="Q90941"/>
<dbReference type="OrthoDB" id="10009055at2759"/>
<dbReference type="PhylomeDB" id="Q90941"/>
<dbReference type="EvolutionaryTrace" id="Q90941"/>
<dbReference type="PRO" id="PR:Q90941"/>
<dbReference type="Proteomes" id="UP000000539">
    <property type="component" value="Unassembled WGS sequence"/>
</dbReference>
<dbReference type="GO" id="GO:0016586">
    <property type="term" value="C:RSC-type complex"/>
    <property type="evidence" value="ECO:0000318"/>
    <property type="project" value="GO_Central"/>
</dbReference>
<dbReference type="GO" id="GO:0016514">
    <property type="term" value="C:SWI/SNF complex"/>
    <property type="evidence" value="ECO:0000318"/>
    <property type="project" value="GO_Central"/>
</dbReference>
<dbReference type="GO" id="GO:0003682">
    <property type="term" value="F:chromatin binding"/>
    <property type="evidence" value="ECO:0000318"/>
    <property type="project" value="GO_Central"/>
</dbReference>
<dbReference type="GO" id="GO:0003677">
    <property type="term" value="F:DNA binding"/>
    <property type="evidence" value="ECO:0007669"/>
    <property type="project" value="UniProtKB-KW"/>
</dbReference>
<dbReference type="GO" id="GO:0006338">
    <property type="term" value="P:chromatin remodeling"/>
    <property type="evidence" value="ECO:0000318"/>
    <property type="project" value="GO_Central"/>
</dbReference>
<dbReference type="GO" id="GO:0006368">
    <property type="term" value="P:transcription elongation by RNA polymerase II"/>
    <property type="evidence" value="ECO:0000318"/>
    <property type="project" value="GO_Central"/>
</dbReference>
<dbReference type="CDD" id="cd04717">
    <property type="entry name" value="BAH_polybromo"/>
    <property type="match status" value="2"/>
</dbReference>
<dbReference type="CDD" id="cd05524">
    <property type="entry name" value="Bromo_polybromo_I"/>
    <property type="match status" value="1"/>
</dbReference>
<dbReference type="CDD" id="cd05517">
    <property type="entry name" value="Bromo_polybromo_II"/>
    <property type="match status" value="1"/>
</dbReference>
<dbReference type="CDD" id="cd05520">
    <property type="entry name" value="Bromo_polybromo_III"/>
    <property type="match status" value="1"/>
</dbReference>
<dbReference type="CDD" id="cd05518">
    <property type="entry name" value="Bromo_polybromo_IV"/>
    <property type="match status" value="1"/>
</dbReference>
<dbReference type="CDD" id="cd05515">
    <property type="entry name" value="Bromo_polybromo_V"/>
    <property type="match status" value="1"/>
</dbReference>
<dbReference type="CDD" id="cd05526">
    <property type="entry name" value="Bromo_polybromo_VI"/>
    <property type="match status" value="1"/>
</dbReference>
<dbReference type="CDD" id="cd21984">
    <property type="entry name" value="HMG-box_PB1"/>
    <property type="match status" value="1"/>
</dbReference>
<dbReference type="FunFam" id="1.10.30.10:FF:000110">
    <property type="entry name" value="Polybromo 1"/>
    <property type="match status" value="1"/>
</dbReference>
<dbReference type="FunFam" id="1.20.920.10:FF:000009">
    <property type="entry name" value="Protein polybromo-1 isoform 1"/>
    <property type="match status" value="1"/>
</dbReference>
<dbReference type="FunFam" id="1.20.920.10:FF:000011">
    <property type="entry name" value="Protein polybromo-1 isoform 1"/>
    <property type="match status" value="1"/>
</dbReference>
<dbReference type="FunFam" id="1.20.920.10:FF:000013">
    <property type="entry name" value="Protein polybromo-1 isoform 1"/>
    <property type="match status" value="1"/>
</dbReference>
<dbReference type="FunFam" id="1.20.920.10:FF:000006">
    <property type="entry name" value="protein polybromo-1 isoform X1"/>
    <property type="match status" value="1"/>
</dbReference>
<dbReference type="FunFam" id="1.20.920.10:FF:000010">
    <property type="entry name" value="protein polybromo-1 isoform X3"/>
    <property type="match status" value="1"/>
</dbReference>
<dbReference type="FunFam" id="1.20.920.10:FF:000015">
    <property type="entry name" value="protein polybromo-1 isoform X3"/>
    <property type="match status" value="1"/>
</dbReference>
<dbReference type="FunFam" id="2.30.30.490:FF:000002">
    <property type="entry name" value="protein polybromo-1 isoform X3"/>
    <property type="match status" value="1"/>
</dbReference>
<dbReference type="FunFam" id="2.30.30.490:FF:000003">
    <property type="entry name" value="protein polybromo-1 isoform X3"/>
    <property type="match status" value="1"/>
</dbReference>
<dbReference type="Gene3D" id="2.30.30.490">
    <property type="match status" value="2"/>
</dbReference>
<dbReference type="Gene3D" id="1.20.920.10">
    <property type="entry name" value="Bromodomain-like"/>
    <property type="match status" value="6"/>
</dbReference>
<dbReference type="InterPro" id="IPR001025">
    <property type="entry name" value="BAH_dom"/>
</dbReference>
<dbReference type="InterPro" id="IPR043151">
    <property type="entry name" value="BAH_sf"/>
</dbReference>
<dbReference type="InterPro" id="IPR001487">
    <property type="entry name" value="Bromodomain"/>
</dbReference>
<dbReference type="InterPro" id="IPR036427">
    <property type="entry name" value="Bromodomain-like_sf"/>
</dbReference>
<dbReference type="InterPro" id="IPR018359">
    <property type="entry name" value="Bromodomain_CS"/>
</dbReference>
<dbReference type="InterPro" id="IPR009071">
    <property type="entry name" value="HMG_box_dom"/>
</dbReference>
<dbReference type="InterPro" id="IPR036910">
    <property type="entry name" value="HMG_box_dom_sf"/>
</dbReference>
<dbReference type="InterPro" id="IPR037968">
    <property type="entry name" value="PBRM1_BD5"/>
</dbReference>
<dbReference type="InterPro" id="IPR037382">
    <property type="entry name" value="Rsc/polybromo"/>
</dbReference>
<dbReference type="PANTHER" id="PTHR16062:SF19">
    <property type="entry name" value="PROTEIN POLYBROMO-1"/>
    <property type="match status" value="1"/>
</dbReference>
<dbReference type="PANTHER" id="PTHR16062">
    <property type="entry name" value="SWI/SNF-RELATED"/>
    <property type="match status" value="1"/>
</dbReference>
<dbReference type="Pfam" id="PF01426">
    <property type="entry name" value="BAH"/>
    <property type="match status" value="2"/>
</dbReference>
<dbReference type="Pfam" id="PF00439">
    <property type="entry name" value="Bromodomain"/>
    <property type="match status" value="6"/>
</dbReference>
<dbReference type="Pfam" id="PF00505">
    <property type="entry name" value="HMG_box"/>
    <property type="match status" value="1"/>
</dbReference>
<dbReference type="PRINTS" id="PR00503">
    <property type="entry name" value="BROMODOMAIN"/>
</dbReference>
<dbReference type="SMART" id="SM00439">
    <property type="entry name" value="BAH"/>
    <property type="match status" value="2"/>
</dbReference>
<dbReference type="SMART" id="SM00297">
    <property type="entry name" value="BROMO"/>
    <property type="match status" value="6"/>
</dbReference>
<dbReference type="SMART" id="SM00398">
    <property type="entry name" value="HMG"/>
    <property type="match status" value="1"/>
</dbReference>
<dbReference type="SUPFAM" id="SSF47370">
    <property type="entry name" value="Bromodomain"/>
    <property type="match status" value="6"/>
</dbReference>
<dbReference type="SUPFAM" id="SSF47095">
    <property type="entry name" value="HMG-box"/>
    <property type="match status" value="1"/>
</dbReference>
<dbReference type="PROSITE" id="PS51038">
    <property type="entry name" value="BAH"/>
    <property type="match status" value="2"/>
</dbReference>
<dbReference type="PROSITE" id="PS00633">
    <property type="entry name" value="BROMODOMAIN_1"/>
    <property type="match status" value="5"/>
</dbReference>
<dbReference type="PROSITE" id="PS50014">
    <property type="entry name" value="BROMODOMAIN_2"/>
    <property type="match status" value="6"/>
</dbReference>
<dbReference type="PROSITE" id="PS50118">
    <property type="entry name" value="HMG_BOX_2"/>
    <property type="match status" value="1"/>
</dbReference>
<sequence>MGSKRRRATSPSSSVSGGDFDDGHHSTNIPGPSRKRRRLSNLPTVDPIAVCHELYNTIRDYKDEQGRLLCELFIRAPKRRNQPDYYEVVSQPIDLMKIQQKLKMEEYDDVNVLTADFQLLFNNAKAYYKPDSPEYKAACKLWELYLRTKNEFVQKGDAEEEDEDEEGHDSQELSSPGYLKEILEQLLEAVAVATNPSGRLISELFQKLPSKVQYPDYYAIIKEPIDLKTIAQRIQNGTYKSIHAMAKDIDLLAKNAKTYNEPGSQVFKDANAIKKIFNMKKAEIEHSELAKSSLRLRTPSNLTASKLTGPSSQGKGSVGDERNSSNKYFRNKRSAQGDRLSAITMALQYGSESDEDAALAAAARYEGESEAESITSFMDTSNPLYQLYDTVRSCRNNQGQLISEPFFQLPSKKKYPDYYQQIKTPISLQQIRAKLKNHEYETLDQLEADLNLMFENAKRYNVPNSAIYKRVLKMQQVMQAKKKELARRDDIEDGDSMISSATSDTGSSKRKSKKNMRKQRMKILYNAVLEARESGTGRRLCDLFMVKPSKKDYPDYYKIILEPMDLKMIEHNIRNDKYVGEEAMIDDMKLMFRNARHYNEEGSQVYNDAHMLEKILKEKRKELGPLPEDDDVASPKLKLSRKSGISPKKSKYMTPMQQKLNEVYEAVKNYTDKRGRRLSAIFLRLPSRSELPDYYITIKKPVDMEKIRSHMMANKYQDIDSMVEDFVMMFNNACTYNEPESLIYKDALVLHKVLLETRREIEGDEDSHVPNVTLLIQELIHNLFVSVMSHQDDEGRCYSDSLAEIPAVDPNFPNKPPLTFDIIRKNVENNRYRRLDLFQENMFEVLERARRMNRTDSEIYEDAVELQQFFIKIRDELCKNGEILLSPALSYTTKHLHNDVEKEKKEKLPKEIEEDKLKREEEKREAEKSEDSSGSAGLSSLHRTYSQDCSFKNSMYHVGDYVYVEPAEANLQPHIVCIERLWEDSAGEKWLYGCWFYRPNETFHLATRKFLEKEVFKSDYYNKVPVSKILGKCVVMFVKEYFKLCPENFRDEDVYVCESRYSAKTKSFKKIKLWTMPVSSVRFVPRDVPLPVVRVASVFANTDKAEEEKHSDTLDDSKVGESILHLEKDKEDVPVEMSNGEPGCHYFEQLCYNDMWLKVGDCVFIKSHGLVRPRVGRIEKMWVRDGAAYFFGPIFIHPEETEHEPTKMFYKKEVFLSNLEETCPMSCILGKCAVLSFKDFLCCRPTEISENDVFLCESRYNESDKQMKKFKGLKRFSLSAKVVDDEIYYFRKPIVPQKEPSPLLEKKIQQLEAKFAELGGGDEDMEEMGEEEGDITETPSMPQLQTPLTSELDIMPYTPPQSTPKSVKGSTKKEGSKRKINMSGYILFSSEMRPVIKAQHPDYSFGELSRLVGTEWRNLEATKKAEYEGMISGYPPVLPPLQGPVDGIVSMGSMQPLHPGVPPPHQLPPGMPGIPGIPPPGVIGQNVSPMVGTPAPGAGPFGQQIGILGPPGQQAPPPYPGQSPATQPVMQQPSTPMFVSPPPKTQRLLHSEAYLKYIEGLSAESNSISKWDQTLAARRRDVHLSKEQESRLPSHWLKSKGAHTTMADALWRLRDLMLRDTLNIRQAYNIENV</sequence>
<reference key="1">
    <citation type="journal article" date="1996" name="Gene">
        <title>Molecular cloning of polybromo, a nuclear protein containing multiple domains including five bromodomains, a turncated HMG-box, and two repeats of a novel domain.</title>
        <authorList>
            <person name="Nicolas R.H."/>
            <person name="Goodwin G.H."/>
        </authorList>
    </citation>
    <scope>NUCLEOTIDE SEQUENCE [MRNA]</scope>
    <scope>SUBCELLULAR LOCATION</scope>
    <scope>SUBUNIT</scope>
</reference>
<reference key="2">
    <citation type="journal article" date="2005" name="Biochem. J.">
        <title>Crystal structure of the proximal BAH domain of the polybromo protein.</title>
        <authorList>
            <person name="Oliver A.W."/>
            <person name="Jones S.A."/>
            <person name="Roe S.M."/>
            <person name="Matthews S."/>
            <person name="Goodwin G.H."/>
            <person name="Pearl L.H."/>
        </authorList>
    </citation>
    <scope>X-RAY CRYSTALLOGRAPHY (1.55 ANGSTROMS) OF 932-1103</scope>
    <scope>STRUCTURE BY NMR</scope>
</reference>
<protein>
    <recommendedName>
        <fullName>Protein polybromo-1</fullName>
    </recommendedName>
</protein>